<sequence length="71" mass="7934">MSQNSITSYKMGFAKHFFLFAVLLCATAMYSVAEPAQERLIESIACMQKGLPCMEHVDCCHGVCDSLFCLY</sequence>
<organism>
    <name type="scientific">Scytodes thoracica</name>
    <name type="common">Spitting spider</name>
    <name type="synonym">Aranea thoracica</name>
    <dbReference type="NCBI Taxonomy" id="1112478"/>
    <lineage>
        <taxon>Eukaryota</taxon>
        <taxon>Metazoa</taxon>
        <taxon>Ecdysozoa</taxon>
        <taxon>Arthropoda</taxon>
        <taxon>Chelicerata</taxon>
        <taxon>Arachnida</taxon>
        <taxon>Araneae</taxon>
        <taxon>Araneomorphae</taxon>
        <taxon>Haplogynae</taxon>
        <taxon>Scytodoidea</taxon>
        <taxon>Scytodidae</taxon>
        <taxon>Scytodes</taxon>
    </lineage>
</organism>
<accession>A0A0A0VBR5</accession>
<reference key="1">
    <citation type="journal article" date="2014" name="J. Proteome Res.">
        <title>Spit and venom from scytodes spiders: a diverse and distinct cocktail.</title>
        <authorList>
            <person name="Zobel-Thropp P.A."/>
            <person name="Correa S.M."/>
            <person name="Garb J.E."/>
            <person name="Binford G.J."/>
        </authorList>
    </citation>
    <scope>NUCLEOTIDE SEQUENCE [MRNA]</scope>
    <source>
        <tissue>Venom gland</tissue>
    </source>
</reference>
<reference evidence="8" key="2">
    <citation type="journal article" date="2016" name="PLoS ONE">
        <title>Characterization of three venom peptides from the spitting spider Scytodes thoracica.</title>
        <authorList>
            <person name="Ariki N.K."/>
            <person name="Munoz L.E."/>
            <person name="Armitage E.L."/>
            <person name="Goodstein F.R."/>
            <person name="George K.G."/>
            <person name="Smith V.L."/>
            <person name="Vetter I."/>
            <person name="Herzig V."/>
            <person name="King G.F."/>
            <person name="Loening N.M."/>
        </authorList>
    </citation>
    <scope>STRUCTURE BY NMR OF 40-71</scope>
    <scope>FUNCTION</scope>
    <scope>DISULFIDE BONDS</scope>
</reference>
<feature type="signal peptide" evidence="1">
    <location>
        <begin position="1"/>
        <end position="33"/>
    </location>
</feature>
<feature type="propeptide" id="PRO_0000448640" evidence="6">
    <location>
        <begin position="34"/>
        <end position="39"/>
    </location>
</feature>
<feature type="chain" id="PRO_5001970751" description="U3-scytotoxin-Sth1h">
    <location>
        <begin position="40"/>
        <end position="71"/>
    </location>
</feature>
<feature type="disulfide bond" evidence="3 8">
    <location>
        <begin position="46"/>
        <end position="60"/>
    </location>
</feature>
<feature type="disulfide bond" evidence="3 8">
    <location>
        <begin position="53"/>
        <end position="64"/>
    </location>
</feature>
<feature type="disulfide bond" evidence="3 8">
    <location>
        <begin position="59"/>
        <end position="69"/>
    </location>
</feature>
<feature type="strand" evidence="9">
    <location>
        <begin position="41"/>
        <end position="43"/>
    </location>
</feature>
<feature type="helix" evidence="9">
    <location>
        <begin position="56"/>
        <end position="58"/>
    </location>
</feature>
<proteinExistence type="evidence at protein level"/>
<evidence type="ECO:0000255" key="1"/>
<evidence type="ECO:0000269" key="2">
    <source>
    </source>
</evidence>
<evidence type="ECO:0000269" key="3">
    <source>
    </source>
</evidence>
<evidence type="ECO:0000303" key="4">
    <source>
    </source>
</evidence>
<evidence type="ECO:0000303" key="5">
    <source>
    </source>
</evidence>
<evidence type="ECO:0000305" key="6"/>
<evidence type="ECO:0000305" key="7">
    <source>
    </source>
</evidence>
<evidence type="ECO:0007744" key="8">
    <source>
        <dbReference type="PDB" id="5FZW"/>
    </source>
</evidence>
<evidence type="ECO:0007829" key="9">
    <source>
        <dbReference type="PDB" id="5FZW"/>
    </source>
</evidence>
<name>U31H_SCYTH</name>
<comment type="function">
    <text evidence="3">Probable insect neurotoxin with ion channel impairing activity (Probable). Does not show activity on 45 human receptors from 9 families (5-hydroxytryptamine, adrenergic, dopamine, muscarinic, histamine, neurotransmitter, opioid, sigma, and gaba(A) receptors) (PubMed:27227898). In vivo, when mixed with U3-SYTX-Sth1a does not cause paralytic or lethal activity when injected into crickets (PubMed:27227898). It is noteworthy that crickets are evolutionarily distant from prey species (PubMed:27227898).</text>
</comment>
<comment type="subcellular location">
    <subcellularLocation>
        <location evidence="2">Secreted</location>
    </subcellularLocation>
</comment>
<comment type="tissue specificity">
    <text evidence="7">Expressed by the venom gland.</text>
</comment>
<comment type="domain">
    <text evidence="3">The presence of a 'disulfide through disulfide knot' structurally defines this protein as a knottin.</text>
</comment>
<comment type="online information" name="Biological Magnetic Resonance Data Bank">
    <link uri="https://bmrb.io/data_library/summary/index.php?bmrbId=26003"/>
</comment>
<keyword id="KW-0002">3D-structure</keyword>
<keyword id="KW-1015">Disulfide bond</keyword>
<keyword id="KW-0872">Ion channel impairing toxin</keyword>
<keyword id="KW-0960">Knottin</keyword>
<keyword id="KW-0528">Neurotoxin</keyword>
<keyword id="KW-0964">Secreted</keyword>
<keyword id="KW-0732">Signal</keyword>
<keyword id="KW-0800">Toxin</keyword>
<dbReference type="EMBL" id="KF860358">
    <property type="protein sequence ID" value="AIW62383.1"/>
    <property type="molecule type" value="mRNA"/>
</dbReference>
<dbReference type="PDB" id="5FZW">
    <property type="method" value="NMR"/>
    <property type="chains" value="A=40-71"/>
</dbReference>
<dbReference type="PDBsum" id="5FZW"/>
<dbReference type="SMR" id="A0A0A0VBR5"/>
<dbReference type="GO" id="GO:0005576">
    <property type="term" value="C:extracellular region"/>
    <property type="evidence" value="ECO:0007669"/>
    <property type="project" value="UniProtKB-SubCell"/>
</dbReference>
<dbReference type="GO" id="GO:0099106">
    <property type="term" value="F:ion channel regulator activity"/>
    <property type="evidence" value="ECO:0007669"/>
    <property type="project" value="UniProtKB-KW"/>
</dbReference>
<dbReference type="GO" id="GO:0090729">
    <property type="term" value="F:toxin activity"/>
    <property type="evidence" value="ECO:0007669"/>
    <property type="project" value="UniProtKB-KW"/>
</dbReference>
<protein>
    <recommendedName>
        <fullName evidence="4 5">U3-scytotoxin-Sth1h</fullName>
        <shortName evidence="4">U3-SYTX-Sth1h</shortName>
        <shortName evidence="5">U3-Sth1h</shortName>
    </recommendedName>
</protein>